<gene>
    <name evidence="1" type="primary">nhaB</name>
    <name type="ordered locus">ECSE_1234</name>
</gene>
<dbReference type="EMBL" id="AP009240">
    <property type="protein sequence ID" value="BAG76758.1"/>
    <property type="molecule type" value="Genomic_DNA"/>
</dbReference>
<dbReference type="RefSeq" id="WP_000406391.1">
    <property type="nucleotide sequence ID" value="NC_011415.1"/>
</dbReference>
<dbReference type="SMR" id="B6I9P7"/>
<dbReference type="GeneID" id="75203299"/>
<dbReference type="KEGG" id="ecy:ECSE_1234"/>
<dbReference type="HOGENOM" id="CLU_041110_0_0_6"/>
<dbReference type="Proteomes" id="UP000008199">
    <property type="component" value="Chromosome"/>
</dbReference>
<dbReference type="GO" id="GO:0005886">
    <property type="term" value="C:plasma membrane"/>
    <property type="evidence" value="ECO:0007669"/>
    <property type="project" value="UniProtKB-SubCell"/>
</dbReference>
<dbReference type="GO" id="GO:0015385">
    <property type="term" value="F:sodium:proton antiporter activity"/>
    <property type="evidence" value="ECO:0007669"/>
    <property type="project" value="InterPro"/>
</dbReference>
<dbReference type="HAMAP" id="MF_01599">
    <property type="entry name" value="NhaB"/>
    <property type="match status" value="1"/>
</dbReference>
<dbReference type="InterPro" id="IPR004671">
    <property type="entry name" value="Na+/H+_antiporter_NhaB"/>
</dbReference>
<dbReference type="NCBIfam" id="TIGR00774">
    <property type="entry name" value="NhaB"/>
    <property type="match status" value="1"/>
</dbReference>
<dbReference type="NCBIfam" id="NF007093">
    <property type="entry name" value="PRK09547.1"/>
    <property type="match status" value="1"/>
</dbReference>
<dbReference type="PANTHER" id="PTHR43302:SF1">
    <property type="entry name" value="NA(+)_H(+) ANTIPORTER NHAB"/>
    <property type="match status" value="1"/>
</dbReference>
<dbReference type="PANTHER" id="PTHR43302">
    <property type="entry name" value="TRANSPORTER ARSB-RELATED"/>
    <property type="match status" value="1"/>
</dbReference>
<dbReference type="Pfam" id="PF06450">
    <property type="entry name" value="NhaB"/>
    <property type="match status" value="1"/>
</dbReference>
<sequence>MEISWGRALWRNFLGQSPDWYKLALIIFLIVNPLIFLISPFVAGWLLVAEFIFTLAMALKCYPLLPGGLLAIEAVFIGMTSAEHVREEVAANLEVLLLLMFMVAGIYFMKQLLLFIFTRLLLSIRSKMLLSLSFCVAAAFLSAFLDALTVVAVVISVAVGFYGIYHRVASSRTEDTDLQDDSHIDKHYKVVLEQFRGFLRSLMMHAGVGTALGGVMTMVGEPQNLIIAKAAGWHFGDFFLRMSPVTVPVLICGLLTCLLVEKLRWFGYGETLPEKVREVLQQFDDQSRHQRTRQDKIRLIVQAIIGVWLVTALALHLAEVGLIGLSVIILATSLTGVTDEHAIGKAFTESLPFTALLTVFFSVVAVIIDQQLFSPIIQFVLQASEHAQLSLFYIFNGLLSSISDNVFVGTIYINEAKAAMESGAITLKQYELLAVAINTGTNLPSVATPNGQAAFLFLLTSALAPLIRLSYGRMVWMALPYTLVLTLVGLLCVEFTLAPVTEWFMQMGWIATL</sequence>
<name>NHAB_ECOSE</name>
<feature type="chain" id="PRO_1000148038" description="Na(+)/H(+) antiporter NhaB">
    <location>
        <begin position="1"/>
        <end position="513"/>
    </location>
</feature>
<feature type="transmembrane region" description="Helical" evidence="1">
    <location>
        <begin position="23"/>
        <end position="43"/>
    </location>
</feature>
<feature type="transmembrane region" description="Helical" evidence="1">
    <location>
        <begin position="52"/>
        <end position="72"/>
    </location>
</feature>
<feature type="transmembrane region" description="Helical" evidence="1">
    <location>
        <begin position="97"/>
        <end position="117"/>
    </location>
</feature>
<feature type="transmembrane region" description="Helical" evidence="1">
    <location>
        <begin position="120"/>
        <end position="140"/>
    </location>
</feature>
<feature type="transmembrane region" description="Helical" evidence="1">
    <location>
        <begin position="144"/>
        <end position="164"/>
    </location>
</feature>
<feature type="transmembrane region" description="Helical" evidence="1">
    <location>
        <begin position="202"/>
        <end position="222"/>
    </location>
</feature>
<feature type="transmembrane region" description="Helical" evidence="1">
    <location>
        <begin position="238"/>
        <end position="258"/>
    </location>
</feature>
<feature type="transmembrane region" description="Helical" evidence="1">
    <location>
        <begin position="303"/>
        <end position="323"/>
    </location>
</feature>
<feature type="transmembrane region" description="Helical" evidence="1">
    <location>
        <begin position="348"/>
        <end position="368"/>
    </location>
</feature>
<feature type="transmembrane region" description="Helical" evidence="1">
    <location>
        <begin position="391"/>
        <end position="411"/>
    </location>
</feature>
<feature type="transmembrane region" description="Helical" evidence="1">
    <location>
        <begin position="447"/>
        <end position="467"/>
    </location>
</feature>
<feature type="transmembrane region" description="Helical" evidence="1">
    <location>
        <begin position="475"/>
        <end position="495"/>
    </location>
</feature>
<proteinExistence type="inferred from homology"/>
<keyword id="KW-0050">Antiport</keyword>
<keyword id="KW-0997">Cell inner membrane</keyword>
<keyword id="KW-1003">Cell membrane</keyword>
<keyword id="KW-0406">Ion transport</keyword>
<keyword id="KW-0472">Membrane</keyword>
<keyword id="KW-0915">Sodium</keyword>
<keyword id="KW-0739">Sodium transport</keyword>
<keyword id="KW-0812">Transmembrane</keyword>
<keyword id="KW-1133">Transmembrane helix</keyword>
<keyword id="KW-0813">Transport</keyword>
<accession>B6I9P7</accession>
<protein>
    <recommendedName>
        <fullName evidence="1">Na(+)/H(+) antiporter NhaB</fullName>
    </recommendedName>
    <alternativeName>
        <fullName evidence="1">Sodium/proton antiporter NhaB</fullName>
    </alternativeName>
</protein>
<comment type="function">
    <text evidence="1">Na(+)/H(+) antiporter that extrudes sodium in exchange for external protons.</text>
</comment>
<comment type="catalytic activity">
    <reaction evidence="1">
        <text>2 Na(+)(in) + 3 H(+)(out) = 2 Na(+)(out) + 3 H(+)(in)</text>
        <dbReference type="Rhea" id="RHEA:29247"/>
        <dbReference type="ChEBI" id="CHEBI:15378"/>
        <dbReference type="ChEBI" id="CHEBI:29101"/>
    </reaction>
    <physiologicalReaction direction="left-to-right" evidence="1">
        <dbReference type="Rhea" id="RHEA:29248"/>
    </physiologicalReaction>
</comment>
<comment type="subcellular location">
    <subcellularLocation>
        <location evidence="1">Cell inner membrane</location>
        <topology evidence="1">Multi-pass membrane protein</topology>
    </subcellularLocation>
</comment>
<comment type="similarity">
    <text evidence="1">Belongs to the NhaB Na(+)/H(+) (TC 2.A.34) antiporter family.</text>
</comment>
<evidence type="ECO:0000255" key="1">
    <source>
        <dbReference type="HAMAP-Rule" id="MF_01599"/>
    </source>
</evidence>
<reference key="1">
    <citation type="journal article" date="2008" name="DNA Res.">
        <title>Complete genome sequence and comparative analysis of the wild-type commensal Escherichia coli strain SE11 isolated from a healthy adult.</title>
        <authorList>
            <person name="Oshima K."/>
            <person name="Toh H."/>
            <person name="Ogura Y."/>
            <person name="Sasamoto H."/>
            <person name="Morita H."/>
            <person name="Park S.-H."/>
            <person name="Ooka T."/>
            <person name="Iyoda S."/>
            <person name="Taylor T.D."/>
            <person name="Hayashi T."/>
            <person name="Itoh K."/>
            <person name="Hattori M."/>
        </authorList>
    </citation>
    <scope>NUCLEOTIDE SEQUENCE [LARGE SCALE GENOMIC DNA]</scope>
    <source>
        <strain>SE11</strain>
    </source>
</reference>
<organism>
    <name type="scientific">Escherichia coli (strain SE11)</name>
    <dbReference type="NCBI Taxonomy" id="409438"/>
    <lineage>
        <taxon>Bacteria</taxon>
        <taxon>Pseudomonadati</taxon>
        <taxon>Pseudomonadota</taxon>
        <taxon>Gammaproteobacteria</taxon>
        <taxon>Enterobacterales</taxon>
        <taxon>Enterobacteriaceae</taxon>
        <taxon>Escherichia</taxon>
    </lineage>
</organism>